<keyword id="KW-0963">Cytoplasm</keyword>
<keyword id="KW-0448">Lipopolysaccharide biosynthesis</keyword>
<keyword id="KW-0548">Nucleotidyltransferase</keyword>
<keyword id="KW-1185">Reference proteome</keyword>
<keyword id="KW-0808">Transferase</keyword>
<accession>A0LE62</accession>
<protein>
    <recommendedName>
        <fullName evidence="1">3-deoxy-manno-octulosonate cytidylyltransferase</fullName>
        <ecNumber evidence="1">2.7.7.38</ecNumber>
    </recommendedName>
    <alternativeName>
        <fullName evidence="1">CMP-2-keto-3-deoxyoctulosonic acid synthase</fullName>
        <shortName evidence="1">CKS</shortName>
        <shortName evidence="1">CMP-KDO synthase</shortName>
    </alternativeName>
</protein>
<organism>
    <name type="scientific">Syntrophobacter fumaroxidans (strain DSM 10017 / MPOB)</name>
    <dbReference type="NCBI Taxonomy" id="335543"/>
    <lineage>
        <taxon>Bacteria</taxon>
        <taxon>Pseudomonadati</taxon>
        <taxon>Thermodesulfobacteriota</taxon>
        <taxon>Syntrophobacteria</taxon>
        <taxon>Syntrophobacterales</taxon>
        <taxon>Syntrophobacteraceae</taxon>
        <taxon>Syntrophobacter</taxon>
    </lineage>
</organism>
<evidence type="ECO:0000255" key="1">
    <source>
        <dbReference type="HAMAP-Rule" id="MF_00057"/>
    </source>
</evidence>
<sequence length="250" mass="27120">MRIVGIIPARYQSSRFPGKPLVDILGKPMIRHVYERSARAGCLDRLIVATDDARIAAAVAGFGGEALLTRADHASGTDRLAEAARLLELDGADIVVNIQGDEPLVNHRMIEALVEALQCDRHCPMATLAFPSESLQDYNNPNVVKVVLDRGLRALYFSRAPIPFVRDGAADAPAFLKHLGFYAYSASFLQTFSRLPPGRLEGLEKLEQLRALEHGYGIRVALSPVDTRGVDTPEDLEAVVPVLAQDAVGA</sequence>
<feature type="chain" id="PRO_1000003387" description="3-deoxy-manno-octulosonate cytidylyltransferase">
    <location>
        <begin position="1"/>
        <end position="250"/>
    </location>
</feature>
<proteinExistence type="inferred from homology"/>
<comment type="function">
    <text evidence="1">Activates KDO (a required 8-carbon sugar) for incorporation into bacterial lipopolysaccharide in Gram-negative bacteria.</text>
</comment>
<comment type="catalytic activity">
    <reaction evidence="1">
        <text>3-deoxy-alpha-D-manno-oct-2-ulosonate + CTP = CMP-3-deoxy-beta-D-manno-octulosonate + diphosphate</text>
        <dbReference type="Rhea" id="RHEA:23448"/>
        <dbReference type="ChEBI" id="CHEBI:33019"/>
        <dbReference type="ChEBI" id="CHEBI:37563"/>
        <dbReference type="ChEBI" id="CHEBI:85986"/>
        <dbReference type="ChEBI" id="CHEBI:85987"/>
        <dbReference type="EC" id="2.7.7.38"/>
    </reaction>
</comment>
<comment type="pathway">
    <text evidence="1">Nucleotide-sugar biosynthesis; CMP-3-deoxy-D-manno-octulosonate biosynthesis; CMP-3-deoxy-D-manno-octulosonate from 3-deoxy-D-manno-octulosonate and CTP: step 1/1.</text>
</comment>
<comment type="pathway">
    <text evidence="1">Bacterial outer membrane biogenesis; lipopolysaccharide biosynthesis.</text>
</comment>
<comment type="subcellular location">
    <subcellularLocation>
        <location evidence="1">Cytoplasm</location>
    </subcellularLocation>
</comment>
<comment type="similarity">
    <text evidence="1">Belongs to the KdsB family.</text>
</comment>
<name>KDSB_SYNFM</name>
<reference key="1">
    <citation type="submission" date="2006-10" db="EMBL/GenBank/DDBJ databases">
        <title>Complete sequence of Syntrophobacter fumaroxidans MPOB.</title>
        <authorList>
            <consortium name="US DOE Joint Genome Institute"/>
            <person name="Copeland A."/>
            <person name="Lucas S."/>
            <person name="Lapidus A."/>
            <person name="Barry K."/>
            <person name="Detter J.C."/>
            <person name="Glavina del Rio T."/>
            <person name="Hammon N."/>
            <person name="Israni S."/>
            <person name="Pitluck S."/>
            <person name="Goltsman E.G."/>
            <person name="Martinez M."/>
            <person name="Schmutz J."/>
            <person name="Larimer F."/>
            <person name="Land M."/>
            <person name="Hauser L."/>
            <person name="Kyrpides N."/>
            <person name="Kim E."/>
            <person name="Boone D.R."/>
            <person name="Brockman F."/>
            <person name="Culley D."/>
            <person name="Ferry J."/>
            <person name="Gunsalus R."/>
            <person name="McInerney M.J."/>
            <person name="Morrison M."/>
            <person name="Plugge C."/>
            <person name="Rohlin L."/>
            <person name="Scholten J."/>
            <person name="Sieber J."/>
            <person name="Stams A.J.M."/>
            <person name="Worm P."/>
            <person name="Henstra A.M."/>
            <person name="Richardson P."/>
        </authorList>
    </citation>
    <scope>NUCLEOTIDE SEQUENCE [LARGE SCALE GENOMIC DNA]</scope>
    <source>
        <strain>DSM 10017 / MPOB</strain>
    </source>
</reference>
<gene>
    <name evidence="1" type="primary">kdsB</name>
    <name type="ordered locus">Sfum_0010</name>
</gene>
<dbReference type="EC" id="2.7.7.38" evidence="1"/>
<dbReference type="EMBL" id="CP000478">
    <property type="protein sequence ID" value="ABK15714.1"/>
    <property type="molecule type" value="Genomic_DNA"/>
</dbReference>
<dbReference type="RefSeq" id="WP_011696887.1">
    <property type="nucleotide sequence ID" value="NC_008554.1"/>
</dbReference>
<dbReference type="SMR" id="A0LE62"/>
<dbReference type="FunCoup" id="A0LE62">
    <property type="interactions" value="422"/>
</dbReference>
<dbReference type="STRING" id="335543.Sfum_0010"/>
<dbReference type="KEGG" id="sfu:Sfum_0010"/>
<dbReference type="eggNOG" id="COG1212">
    <property type="taxonomic scope" value="Bacteria"/>
</dbReference>
<dbReference type="HOGENOM" id="CLU_065038_0_1_7"/>
<dbReference type="InParanoid" id="A0LE62"/>
<dbReference type="OrthoDB" id="9815559at2"/>
<dbReference type="UniPathway" id="UPA00030"/>
<dbReference type="UniPathway" id="UPA00358">
    <property type="reaction ID" value="UER00476"/>
</dbReference>
<dbReference type="Proteomes" id="UP000001784">
    <property type="component" value="Chromosome"/>
</dbReference>
<dbReference type="GO" id="GO:0005829">
    <property type="term" value="C:cytosol"/>
    <property type="evidence" value="ECO:0007669"/>
    <property type="project" value="TreeGrafter"/>
</dbReference>
<dbReference type="GO" id="GO:0008690">
    <property type="term" value="F:3-deoxy-manno-octulosonate cytidylyltransferase activity"/>
    <property type="evidence" value="ECO:0007669"/>
    <property type="project" value="UniProtKB-UniRule"/>
</dbReference>
<dbReference type="GO" id="GO:0033468">
    <property type="term" value="P:CMP-keto-3-deoxy-D-manno-octulosonic acid biosynthetic process"/>
    <property type="evidence" value="ECO:0007669"/>
    <property type="project" value="UniProtKB-UniRule"/>
</dbReference>
<dbReference type="GO" id="GO:0009103">
    <property type="term" value="P:lipopolysaccharide biosynthetic process"/>
    <property type="evidence" value="ECO:0007669"/>
    <property type="project" value="UniProtKB-UniRule"/>
</dbReference>
<dbReference type="CDD" id="cd02517">
    <property type="entry name" value="CMP-KDO-Synthetase"/>
    <property type="match status" value="1"/>
</dbReference>
<dbReference type="FunFam" id="3.90.550.10:FF:000011">
    <property type="entry name" value="3-deoxy-manno-octulosonate cytidylyltransferase"/>
    <property type="match status" value="1"/>
</dbReference>
<dbReference type="Gene3D" id="3.90.550.10">
    <property type="entry name" value="Spore Coat Polysaccharide Biosynthesis Protein SpsA, Chain A"/>
    <property type="match status" value="1"/>
</dbReference>
<dbReference type="HAMAP" id="MF_00057">
    <property type="entry name" value="KdsB"/>
    <property type="match status" value="1"/>
</dbReference>
<dbReference type="InterPro" id="IPR003329">
    <property type="entry name" value="Cytidylyl_trans"/>
</dbReference>
<dbReference type="InterPro" id="IPR004528">
    <property type="entry name" value="KdsB"/>
</dbReference>
<dbReference type="InterPro" id="IPR029044">
    <property type="entry name" value="Nucleotide-diphossugar_trans"/>
</dbReference>
<dbReference type="NCBIfam" id="TIGR00466">
    <property type="entry name" value="kdsB"/>
    <property type="match status" value="1"/>
</dbReference>
<dbReference type="NCBIfam" id="NF003950">
    <property type="entry name" value="PRK05450.1-3"/>
    <property type="match status" value="1"/>
</dbReference>
<dbReference type="NCBIfam" id="NF003952">
    <property type="entry name" value="PRK05450.1-5"/>
    <property type="match status" value="1"/>
</dbReference>
<dbReference type="NCBIfam" id="NF009905">
    <property type="entry name" value="PRK13368.1"/>
    <property type="match status" value="1"/>
</dbReference>
<dbReference type="PANTHER" id="PTHR42866">
    <property type="entry name" value="3-DEOXY-MANNO-OCTULOSONATE CYTIDYLYLTRANSFERASE"/>
    <property type="match status" value="1"/>
</dbReference>
<dbReference type="PANTHER" id="PTHR42866:SF2">
    <property type="entry name" value="3-DEOXY-MANNO-OCTULOSONATE CYTIDYLYLTRANSFERASE, MITOCHONDRIAL"/>
    <property type="match status" value="1"/>
</dbReference>
<dbReference type="Pfam" id="PF02348">
    <property type="entry name" value="CTP_transf_3"/>
    <property type="match status" value="1"/>
</dbReference>
<dbReference type="SUPFAM" id="SSF53448">
    <property type="entry name" value="Nucleotide-diphospho-sugar transferases"/>
    <property type="match status" value="1"/>
</dbReference>